<name>MILR1_RAT</name>
<sequence>MGDDDTPVCLSVASCKGVSCWLDKLLLWALTLSITLRNTAVDCRRVDRNGLLSPNLNSSMSVVRMGQNVSLSCSSKNTSIDITYSLFLGKRYLESKRRRGGAVDFHLRISNANESGPYKCKVNDSNSSKYSQNFNFTIIQDESCSSCLLSLLLPGVLLGLILPGLAFLIYLKYKKGCTGKTLKENESKGSGDAPTQGELYANICETQKGSEQLQEIHYTTPVFKEVAPTEQEGLEDRKDDYIYSELTY</sequence>
<evidence type="ECO:0000250" key="1"/>
<evidence type="ECO:0000250" key="2">
    <source>
        <dbReference type="UniProtKB" id="Q3TB92"/>
    </source>
</evidence>
<evidence type="ECO:0000255" key="3"/>
<evidence type="ECO:0000255" key="4">
    <source>
        <dbReference type="PROSITE-ProRule" id="PRU00114"/>
    </source>
</evidence>
<evidence type="ECO:0000269" key="5">
    <source>
    </source>
</evidence>
<evidence type="ECO:0000305" key="6"/>
<reference key="1">
    <citation type="journal article" date="1995" name="J. Immunol.">
        <title>Identification and characterization of a novel surface antigen gene induced in mast cells activated through the high affinity IgE receptor.</title>
        <authorList>
            <person name="Pirozzi G."/>
            <person name="Terry R.W."/>
            <person name="Epstein D."/>
            <person name="Labow M.A."/>
        </authorList>
    </citation>
    <scope>NUCLEOTIDE SEQUENCE [MRNA]</scope>
    <scope>SUBCELLULAR LOCATION</scope>
    <scope>INDUCTION</scope>
    <scope>TISSUE SPECIFICITY</scope>
</reference>
<protein>
    <recommendedName>
        <fullName>Allergin-1</fullName>
    </recommendedName>
    <alternativeName>
        <fullName>Allergy inhibitory receptor 1</fullName>
    </alternativeName>
    <alternativeName>
        <fullName>Mast cell antigen 32</fullName>
        <shortName>MCA-32</shortName>
        <shortName>Mast cell Ag-32</shortName>
    </alternativeName>
    <alternativeName>
        <fullName>Mast cell immunoglobulin-like receptor 1</fullName>
    </alternativeName>
</protein>
<organism>
    <name type="scientific">Rattus norvegicus</name>
    <name type="common">Rat</name>
    <dbReference type="NCBI Taxonomy" id="10116"/>
    <lineage>
        <taxon>Eukaryota</taxon>
        <taxon>Metazoa</taxon>
        <taxon>Chordata</taxon>
        <taxon>Craniata</taxon>
        <taxon>Vertebrata</taxon>
        <taxon>Euteleostomi</taxon>
        <taxon>Mammalia</taxon>
        <taxon>Eutheria</taxon>
        <taxon>Euarchontoglires</taxon>
        <taxon>Glires</taxon>
        <taxon>Rodentia</taxon>
        <taxon>Myomorpha</taxon>
        <taxon>Muroidea</taxon>
        <taxon>Muridae</taxon>
        <taxon>Murinae</taxon>
        <taxon>Rattus</taxon>
    </lineage>
</organism>
<keyword id="KW-1003">Cell membrane</keyword>
<keyword id="KW-1015">Disulfide bond</keyword>
<keyword id="KW-0325">Glycoprotein</keyword>
<keyword id="KW-0393">Immunoglobulin domain</keyword>
<keyword id="KW-0472">Membrane</keyword>
<keyword id="KW-0597">Phosphoprotein</keyword>
<keyword id="KW-1185">Reference proteome</keyword>
<keyword id="KW-0732">Signal</keyword>
<keyword id="KW-0812">Transmembrane</keyword>
<keyword id="KW-1133">Transmembrane helix</keyword>
<comment type="function">
    <text evidence="1">Immunoglobulin-like receptor which plays an inhibitory role in degranulation of mast cells. Negatively regulates IgE-mediated mast cell activation and suppresses the type I immediate hypersensitivity reaction (By similarity).</text>
</comment>
<comment type="subunit">
    <text evidence="1">Monomer. Interacts (tyrosine-phosphorylated) with PTPN6, PTPN11 and INPP5D.</text>
</comment>
<comment type="subcellular location">
    <subcellularLocation>
        <location evidence="5">Cell membrane</location>
        <topology evidence="5">Single-pass type I membrane protein</topology>
    </subcellularLocation>
</comment>
<comment type="tissue specificity">
    <text evidence="5">Mast cell-specific. Expressed in primary and transformed mast cells.</text>
</comment>
<comment type="induction">
    <text evidence="5">Up-regulated in response to mast cell activation.</text>
</comment>
<comment type="PTM">
    <text evidence="1">N-glycosylated.</text>
</comment>
<comment type="sequence caution" evidence="6">
    <conflict type="erroneous initiation">
        <sequence resource="EMBL-CDS" id="AAC52339"/>
    </conflict>
    <text>Extended N-terminus.</text>
</comment>
<dbReference type="EMBL" id="U39546">
    <property type="protein sequence ID" value="AAC52339.1"/>
    <property type="status" value="ALT_INIT"/>
    <property type="molecule type" value="mRNA"/>
</dbReference>
<dbReference type="RefSeq" id="NP_067596.1">
    <property type="nucleotide sequence ID" value="NM_021585.1"/>
</dbReference>
<dbReference type="FunCoup" id="Q62875">
    <property type="interactions" value="10"/>
</dbReference>
<dbReference type="STRING" id="10116.ENSRNOP00000072914"/>
<dbReference type="GlyCosmos" id="Q62875">
    <property type="glycosylation" value="2 sites, No reported glycans"/>
</dbReference>
<dbReference type="GlyGen" id="Q62875">
    <property type="glycosylation" value="2 sites"/>
</dbReference>
<dbReference type="iPTMnet" id="Q62875"/>
<dbReference type="PhosphoSitePlus" id="Q62875"/>
<dbReference type="PaxDb" id="10116-ENSRNOP00000048321"/>
<dbReference type="GeneID" id="59105"/>
<dbReference type="KEGG" id="rno:59105"/>
<dbReference type="UCSC" id="RGD:620488">
    <property type="organism name" value="rat"/>
</dbReference>
<dbReference type="AGR" id="RGD:620488"/>
<dbReference type="CTD" id="284021"/>
<dbReference type="RGD" id="620488">
    <property type="gene designation" value="Milr1"/>
</dbReference>
<dbReference type="InParanoid" id="Q62875"/>
<dbReference type="PhylomeDB" id="Q62875"/>
<dbReference type="PRO" id="PR:Q62875"/>
<dbReference type="Proteomes" id="UP000002494">
    <property type="component" value="Unplaced"/>
</dbReference>
<dbReference type="GO" id="GO:0005886">
    <property type="term" value="C:plasma membrane"/>
    <property type="evidence" value="ECO:0000250"/>
    <property type="project" value="UniProtKB"/>
</dbReference>
<dbReference type="GO" id="GO:0043303">
    <property type="term" value="P:mast cell degranulation"/>
    <property type="evidence" value="ECO:0000250"/>
    <property type="project" value="UniProtKB"/>
</dbReference>
<dbReference type="GO" id="GO:0033004">
    <property type="term" value="P:negative regulation of mast cell activation"/>
    <property type="evidence" value="ECO:0000250"/>
    <property type="project" value="UniProtKB"/>
</dbReference>
<dbReference type="Gene3D" id="2.60.40.10">
    <property type="entry name" value="Immunoglobulins"/>
    <property type="match status" value="1"/>
</dbReference>
<dbReference type="InterPro" id="IPR007110">
    <property type="entry name" value="Ig-like_dom"/>
</dbReference>
<dbReference type="InterPro" id="IPR036179">
    <property type="entry name" value="Ig-like_dom_sf"/>
</dbReference>
<dbReference type="InterPro" id="IPR013783">
    <property type="entry name" value="Ig-like_fold"/>
</dbReference>
<dbReference type="InterPro" id="IPR003599">
    <property type="entry name" value="Ig_sub"/>
</dbReference>
<dbReference type="Pfam" id="PF13895">
    <property type="entry name" value="Ig_2"/>
    <property type="match status" value="1"/>
</dbReference>
<dbReference type="SMART" id="SM00409">
    <property type="entry name" value="IG"/>
    <property type="match status" value="1"/>
</dbReference>
<dbReference type="SUPFAM" id="SSF48726">
    <property type="entry name" value="Immunoglobulin"/>
    <property type="match status" value="1"/>
</dbReference>
<dbReference type="PROSITE" id="PS50835">
    <property type="entry name" value="IG_LIKE"/>
    <property type="match status" value="1"/>
</dbReference>
<gene>
    <name type="primary">Milr1</name>
    <name type="synonym">Mca32</name>
</gene>
<feature type="signal peptide" evidence="3">
    <location>
        <begin position="1"/>
        <end position="33"/>
    </location>
</feature>
<feature type="chain" id="PRO_0000307366" description="Allergin-1">
    <location>
        <begin position="34"/>
        <end position="248"/>
    </location>
</feature>
<feature type="topological domain" description="Extracellular" evidence="3">
    <location>
        <begin position="34"/>
        <end position="150"/>
    </location>
</feature>
<feature type="transmembrane region" description="Helical" evidence="3">
    <location>
        <begin position="151"/>
        <end position="171"/>
    </location>
</feature>
<feature type="topological domain" description="Cytoplasmic" evidence="3">
    <location>
        <begin position="172"/>
        <end position="248"/>
    </location>
</feature>
<feature type="domain" description="Ig-like C2-type">
    <location>
        <begin position="54"/>
        <end position="137"/>
    </location>
</feature>
<feature type="short sequence motif" description="ITIM motif" evidence="1">
    <location>
        <begin position="216"/>
        <end position="221"/>
    </location>
</feature>
<feature type="short sequence motif" description="ITIM motif" evidence="1">
    <location>
        <begin position="241"/>
        <end position="246"/>
    </location>
</feature>
<feature type="modified residue" description="Phosphotyrosine" evidence="2">
    <location>
        <position position="218"/>
    </location>
</feature>
<feature type="modified residue" description="Phosphotyrosine" evidence="2">
    <location>
        <position position="243"/>
    </location>
</feature>
<feature type="glycosylation site" description="N-linked (GlcNAc...) asparagine" evidence="3">
    <location>
        <position position="68"/>
    </location>
</feature>
<feature type="glycosylation site" description="N-linked (GlcNAc...) asparagine" evidence="3">
    <location>
        <position position="135"/>
    </location>
</feature>
<feature type="disulfide bond" evidence="4">
    <location>
        <begin position="73"/>
        <end position="120"/>
    </location>
</feature>
<proteinExistence type="evidence at transcript level"/>
<accession>Q62875</accession>